<gene>
    <name evidence="1" type="primary">rhmA</name>
    <name type="ordered locus">SCH_2292</name>
</gene>
<reference key="1">
    <citation type="journal article" date="2005" name="Nucleic Acids Res.">
        <title>The genome sequence of Salmonella enterica serovar Choleraesuis, a highly invasive and resistant zoonotic pathogen.</title>
        <authorList>
            <person name="Chiu C.-H."/>
            <person name="Tang P."/>
            <person name="Chu C."/>
            <person name="Hu S."/>
            <person name="Bao Q."/>
            <person name="Yu J."/>
            <person name="Chou Y.-Y."/>
            <person name="Wang H.-S."/>
            <person name="Lee Y.-S."/>
        </authorList>
    </citation>
    <scope>NUCLEOTIDE SEQUENCE [LARGE SCALE GENOMIC DNA]</scope>
    <source>
        <strain>SC-B67</strain>
    </source>
</reference>
<protein>
    <recommendedName>
        <fullName evidence="1">2-keto-3-deoxy-L-rhamnonate aldolase</fullName>
        <shortName evidence="1">KDR aldolase</shortName>
        <ecNumber evidence="1">4.1.2.53</ecNumber>
    </recommendedName>
    <alternativeName>
        <fullName evidence="1">2-dehydro-3-deoxyrhamnonate aldolase</fullName>
    </alternativeName>
</protein>
<proteinExistence type="inferred from homology"/>
<name>RHMA_SALCH</name>
<evidence type="ECO:0000255" key="1">
    <source>
        <dbReference type="HAMAP-Rule" id="MF_01290"/>
    </source>
</evidence>
<feature type="chain" id="PRO_0000353173" description="2-keto-3-deoxy-L-rhamnonate aldolase">
    <location>
        <begin position="1"/>
        <end position="267"/>
    </location>
</feature>
<feature type="active site" description="Proton acceptor" evidence="1">
    <location>
        <position position="49"/>
    </location>
</feature>
<feature type="binding site" evidence="1">
    <location>
        <position position="151"/>
    </location>
    <ligand>
        <name>substrate</name>
    </ligand>
</feature>
<feature type="binding site" evidence="1">
    <location>
        <position position="153"/>
    </location>
    <ligand>
        <name>Mg(2+)</name>
        <dbReference type="ChEBI" id="CHEBI:18420"/>
    </ligand>
</feature>
<feature type="binding site" evidence="1">
    <location>
        <position position="178"/>
    </location>
    <ligand>
        <name>substrate</name>
    </ligand>
</feature>
<feature type="binding site" evidence="1">
    <location>
        <position position="179"/>
    </location>
    <ligand>
        <name>Mg(2+)</name>
        <dbReference type="ChEBI" id="CHEBI:18420"/>
    </ligand>
</feature>
<feature type="binding site" evidence="1">
    <location>
        <position position="179"/>
    </location>
    <ligand>
        <name>substrate</name>
    </ligand>
</feature>
<feature type="site" description="Transition state stabilizer" evidence="1">
    <location>
        <position position="74"/>
    </location>
</feature>
<feature type="site" description="Increases basicity of active site His" evidence="1">
    <location>
        <position position="88"/>
    </location>
</feature>
<sequence length="267" mass="28727">MNALLSNPFKEGLRKGDTQIGLWLSSTTSYMAEIAATSGYDWLLIDGEHAPNTVQDLYHQLQAIAPYASQPVIRPIEGSKALIKQVLDIGAQTLLIPMVDTAEQARQVVSATRYPPLGQRGVGASVARAARWGRIDNYMAQANESLCLLVQVESKVALENLDAILEVEGIDGVFIGPADLSASLGYPDNAGHPEVQRIIEACIYRIRAAGKAAGFLAVDPAMAQKCLAWGANFVAVGVDTMLYTEALDSRLAMFKSVQSVSTAKRSY</sequence>
<accession>Q57M64</accession>
<organism>
    <name type="scientific">Salmonella choleraesuis (strain SC-B67)</name>
    <dbReference type="NCBI Taxonomy" id="321314"/>
    <lineage>
        <taxon>Bacteria</taxon>
        <taxon>Pseudomonadati</taxon>
        <taxon>Pseudomonadota</taxon>
        <taxon>Gammaproteobacteria</taxon>
        <taxon>Enterobacterales</taxon>
        <taxon>Enterobacteriaceae</taxon>
        <taxon>Salmonella</taxon>
    </lineage>
</organism>
<dbReference type="EC" id="4.1.2.53" evidence="1"/>
<dbReference type="EMBL" id="AE017220">
    <property type="protein sequence ID" value="AAX66198.1"/>
    <property type="molecule type" value="Genomic_DNA"/>
</dbReference>
<dbReference type="SMR" id="Q57M64"/>
<dbReference type="KEGG" id="sec:SCH_2292"/>
<dbReference type="HOGENOM" id="CLU_059964_1_0_6"/>
<dbReference type="Proteomes" id="UP000000538">
    <property type="component" value="Chromosome"/>
</dbReference>
<dbReference type="GO" id="GO:0005737">
    <property type="term" value="C:cytoplasm"/>
    <property type="evidence" value="ECO:0007669"/>
    <property type="project" value="TreeGrafter"/>
</dbReference>
<dbReference type="GO" id="GO:0106099">
    <property type="term" value="F:2-keto-3-deoxy-L-rhamnonate aldolase activity"/>
    <property type="evidence" value="ECO:0007669"/>
    <property type="project" value="UniProtKB-EC"/>
</dbReference>
<dbReference type="GO" id="GO:0000287">
    <property type="term" value="F:magnesium ion binding"/>
    <property type="evidence" value="ECO:0007669"/>
    <property type="project" value="UniProtKB-UniRule"/>
</dbReference>
<dbReference type="FunFam" id="3.20.20.60:FF:000004">
    <property type="entry name" value="5-keto-4-deoxy-D-glucarate aldolase"/>
    <property type="match status" value="1"/>
</dbReference>
<dbReference type="Gene3D" id="3.20.20.60">
    <property type="entry name" value="Phosphoenolpyruvate-binding domains"/>
    <property type="match status" value="1"/>
</dbReference>
<dbReference type="HAMAP" id="MF_01290">
    <property type="entry name" value="KDR_aldolase"/>
    <property type="match status" value="1"/>
</dbReference>
<dbReference type="InterPro" id="IPR005000">
    <property type="entry name" value="Aldolase/citrate-lyase_domain"/>
</dbReference>
<dbReference type="InterPro" id="IPR050251">
    <property type="entry name" value="HpcH-HpaI_aldolase"/>
</dbReference>
<dbReference type="InterPro" id="IPR023593">
    <property type="entry name" value="KDR_aldolase"/>
</dbReference>
<dbReference type="InterPro" id="IPR015813">
    <property type="entry name" value="Pyrv/PenolPyrv_kinase-like_dom"/>
</dbReference>
<dbReference type="InterPro" id="IPR040442">
    <property type="entry name" value="Pyrv_kinase-like_dom_sf"/>
</dbReference>
<dbReference type="NCBIfam" id="NF007521">
    <property type="entry name" value="PRK10128.1"/>
    <property type="match status" value="1"/>
</dbReference>
<dbReference type="PANTHER" id="PTHR30502">
    <property type="entry name" value="2-KETO-3-DEOXY-L-RHAMNONATE ALDOLASE"/>
    <property type="match status" value="1"/>
</dbReference>
<dbReference type="PANTHER" id="PTHR30502:SF5">
    <property type="entry name" value="2-KETO-3-DEOXY-L-RHAMNONATE ALDOLASE"/>
    <property type="match status" value="1"/>
</dbReference>
<dbReference type="Pfam" id="PF03328">
    <property type="entry name" value="HpcH_HpaI"/>
    <property type="match status" value="1"/>
</dbReference>
<dbReference type="SUPFAM" id="SSF51621">
    <property type="entry name" value="Phosphoenolpyruvate/pyruvate domain"/>
    <property type="match status" value="1"/>
</dbReference>
<comment type="function">
    <text evidence="1">Catalyzes the reversible retro-aldol cleavage of 2-keto-3-deoxy-L-rhamnonate (KDR) to pyruvate and lactaldehyde.</text>
</comment>
<comment type="catalytic activity">
    <reaction evidence="1">
        <text>2-dehydro-3-deoxy-L-rhamnonate = (S)-lactaldehyde + pyruvate</text>
        <dbReference type="Rhea" id="RHEA:25784"/>
        <dbReference type="ChEBI" id="CHEBI:15361"/>
        <dbReference type="ChEBI" id="CHEBI:18041"/>
        <dbReference type="ChEBI" id="CHEBI:58371"/>
        <dbReference type="EC" id="4.1.2.53"/>
    </reaction>
</comment>
<comment type="cofactor">
    <cofactor evidence="1">
        <name>Mg(2+)</name>
        <dbReference type="ChEBI" id="CHEBI:18420"/>
    </cofactor>
    <text evidence="1">Binds 1 Mg(2+) ion per subunit.</text>
</comment>
<comment type="subunit">
    <text evidence="1">Homohexamer.</text>
</comment>
<comment type="similarity">
    <text evidence="1">Belongs to the HpcH/HpaI aldolase family. KDR aldolase subfamily.</text>
</comment>
<keyword id="KW-0456">Lyase</keyword>
<keyword id="KW-0460">Magnesium</keyword>
<keyword id="KW-0479">Metal-binding</keyword>